<accession>B5F228</accession>
<name>UNG_SALA4</name>
<gene>
    <name evidence="1" type="primary">ung</name>
    <name type="ordered locus">SeAg_B2757</name>
</gene>
<protein>
    <recommendedName>
        <fullName evidence="1">Uracil-DNA glycosylase</fullName>
        <shortName evidence="1">UDG</shortName>
        <ecNumber evidence="1">3.2.2.27</ecNumber>
    </recommendedName>
</protein>
<proteinExistence type="inferred from homology"/>
<reference key="1">
    <citation type="journal article" date="2011" name="J. Bacteriol.">
        <title>Comparative genomics of 28 Salmonella enterica isolates: evidence for CRISPR-mediated adaptive sublineage evolution.</title>
        <authorList>
            <person name="Fricke W.F."/>
            <person name="Mammel M.K."/>
            <person name="McDermott P.F."/>
            <person name="Tartera C."/>
            <person name="White D.G."/>
            <person name="Leclerc J.E."/>
            <person name="Ravel J."/>
            <person name="Cebula T.A."/>
        </authorList>
    </citation>
    <scope>NUCLEOTIDE SEQUENCE [LARGE SCALE GENOMIC DNA]</scope>
    <source>
        <strain>SL483</strain>
    </source>
</reference>
<dbReference type="EC" id="3.2.2.27" evidence="1"/>
<dbReference type="EMBL" id="CP001138">
    <property type="protein sequence ID" value="ACH49657.1"/>
    <property type="molecule type" value="Genomic_DNA"/>
</dbReference>
<dbReference type="RefSeq" id="WP_000179975.1">
    <property type="nucleotide sequence ID" value="NC_011149.1"/>
</dbReference>
<dbReference type="SMR" id="B5F228"/>
<dbReference type="KEGG" id="sea:SeAg_B2757"/>
<dbReference type="HOGENOM" id="CLU_032162_3_0_6"/>
<dbReference type="Proteomes" id="UP000008819">
    <property type="component" value="Chromosome"/>
</dbReference>
<dbReference type="GO" id="GO:0005737">
    <property type="term" value="C:cytoplasm"/>
    <property type="evidence" value="ECO:0007669"/>
    <property type="project" value="UniProtKB-SubCell"/>
</dbReference>
<dbReference type="GO" id="GO:0004844">
    <property type="term" value="F:uracil DNA N-glycosylase activity"/>
    <property type="evidence" value="ECO:0007669"/>
    <property type="project" value="UniProtKB-UniRule"/>
</dbReference>
<dbReference type="GO" id="GO:0097510">
    <property type="term" value="P:base-excision repair, AP site formation via deaminated base removal"/>
    <property type="evidence" value="ECO:0007669"/>
    <property type="project" value="TreeGrafter"/>
</dbReference>
<dbReference type="CDD" id="cd10027">
    <property type="entry name" value="UDG-F1-like"/>
    <property type="match status" value="1"/>
</dbReference>
<dbReference type="FunFam" id="3.40.470.10:FF:000001">
    <property type="entry name" value="Uracil-DNA glycosylase"/>
    <property type="match status" value="1"/>
</dbReference>
<dbReference type="Gene3D" id="3.40.470.10">
    <property type="entry name" value="Uracil-DNA glycosylase-like domain"/>
    <property type="match status" value="1"/>
</dbReference>
<dbReference type="HAMAP" id="MF_00148">
    <property type="entry name" value="UDG"/>
    <property type="match status" value="1"/>
</dbReference>
<dbReference type="InterPro" id="IPR002043">
    <property type="entry name" value="UDG_fam1"/>
</dbReference>
<dbReference type="InterPro" id="IPR018085">
    <property type="entry name" value="Ura-DNA_Glyclase_AS"/>
</dbReference>
<dbReference type="InterPro" id="IPR005122">
    <property type="entry name" value="Uracil-DNA_glycosylase-like"/>
</dbReference>
<dbReference type="InterPro" id="IPR036895">
    <property type="entry name" value="Uracil-DNA_glycosylase-like_sf"/>
</dbReference>
<dbReference type="NCBIfam" id="NF003588">
    <property type="entry name" value="PRK05254.1-1"/>
    <property type="match status" value="1"/>
</dbReference>
<dbReference type="NCBIfam" id="NF003589">
    <property type="entry name" value="PRK05254.1-2"/>
    <property type="match status" value="1"/>
</dbReference>
<dbReference type="NCBIfam" id="NF003591">
    <property type="entry name" value="PRK05254.1-4"/>
    <property type="match status" value="1"/>
</dbReference>
<dbReference type="NCBIfam" id="NF003592">
    <property type="entry name" value="PRK05254.1-5"/>
    <property type="match status" value="1"/>
</dbReference>
<dbReference type="NCBIfam" id="TIGR00628">
    <property type="entry name" value="ung"/>
    <property type="match status" value="1"/>
</dbReference>
<dbReference type="PANTHER" id="PTHR11264">
    <property type="entry name" value="URACIL-DNA GLYCOSYLASE"/>
    <property type="match status" value="1"/>
</dbReference>
<dbReference type="PANTHER" id="PTHR11264:SF0">
    <property type="entry name" value="URACIL-DNA GLYCOSYLASE"/>
    <property type="match status" value="1"/>
</dbReference>
<dbReference type="Pfam" id="PF03167">
    <property type="entry name" value="UDG"/>
    <property type="match status" value="1"/>
</dbReference>
<dbReference type="SMART" id="SM00986">
    <property type="entry name" value="UDG"/>
    <property type="match status" value="1"/>
</dbReference>
<dbReference type="SMART" id="SM00987">
    <property type="entry name" value="UreE_C"/>
    <property type="match status" value="1"/>
</dbReference>
<dbReference type="SUPFAM" id="SSF52141">
    <property type="entry name" value="Uracil-DNA glycosylase-like"/>
    <property type="match status" value="1"/>
</dbReference>
<dbReference type="PROSITE" id="PS00130">
    <property type="entry name" value="U_DNA_GLYCOSYLASE"/>
    <property type="match status" value="1"/>
</dbReference>
<sequence length="229" mass="25462">MATELTWHDVLADEKQQPYFINTLHTVAGERQSGITVYPPQKDVFNAFRFTELGDVKVVILGQDPYHGPGQAHGLAFSVRPGIAPPPSLVNIYKELEASIPGFVRPAHGYLESWARQGVLLLNTVLTVRAGQAHSHASLGWETFTDKVISLINQHREGVVFLLWGSHAQKKGAIIDPQRHHILKAPHPSPLSAHRGFFGCNHFALTNQWLEQHGEKTIDWTPVLPAESE</sequence>
<organism>
    <name type="scientific">Salmonella agona (strain SL483)</name>
    <dbReference type="NCBI Taxonomy" id="454166"/>
    <lineage>
        <taxon>Bacteria</taxon>
        <taxon>Pseudomonadati</taxon>
        <taxon>Pseudomonadota</taxon>
        <taxon>Gammaproteobacteria</taxon>
        <taxon>Enterobacterales</taxon>
        <taxon>Enterobacteriaceae</taxon>
        <taxon>Salmonella</taxon>
    </lineage>
</organism>
<evidence type="ECO:0000255" key="1">
    <source>
        <dbReference type="HAMAP-Rule" id="MF_00148"/>
    </source>
</evidence>
<keyword id="KW-0963">Cytoplasm</keyword>
<keyword id="KW-0227">DNA damage</keyword>
<keyword id="KW-0234">DNA repair</keyword>
<keyword id="KW-0378">Hydrolase</keyword>
<comment type="function">
    <text evidence="1">Excises uracil residues from the DNA which can arise as a result of misincorporation of dUMP residues by DNA polymerase or due to deamination of cytosine.</text>
</comment>
<comment type="catalytic activity">
    <reaction evidence="1">
        <text>Hydrolyzes single-stranded DNA or mismatched double-stranded DNA and polynucleotides, releasing free uracil.</text>
        <dbReference type="EC" id="3.2.2.27"/>
    </reaction>
</comment>
<comment type="subcellular location">
    <subcellularLocation>
        <location evidence="1">Cytoplasm</location>
    </subcellularLocation>
</comment>
<comment type="similarity">
    <text evidence="1">Belongs to the uracil-DNA glycosylase (UDG) superfamily. UNG family.</text>
</comment>
<feature type="chain" id="PRO_1000096601" description="Uracil-DNA glycosylase">
    <location>
        <begin position="1"/>
        <end position="229"/>
    </location>
</feature>
<feature type="active site" description="Proton acceptor" evidence="1">
    <location>
        <position position="64"/>
    </location>
</feature>